<proteinExistence type="inferred from homology"/>
<name>RL23_FINM2</name>
<comment type="function">
    <text evidence="1">One of the early assembly proteins it binds 23S rRNA. One of the proteins that surrounds the polypeptide exit tunnel on the outside of the ribosome. Forms the main docking site for trigger factor binding to the ribosome.</text>
</comment>
<comment type="subunit">
    <text evidence="1">Part of the 50S ribosomal subunit. Contacts protein L29, and trigger factor when it is bound to the ribosome.</text>
</comment>
<comment type="similarity">
    <text evidence="1">Belongs to the universal ribosomal protein uL23 family.</text>
</comment>
<dbReference type="EMBL" id="AP008971">
    <property type="protein sequence ID" value="BAG07575.1"/>
    <property type="molecule type" value="Genomic_DNA"/>
</dbReference>
<dbReference type="RefSeq" id="WP_002836110.1">
    <property type="nucleotide sequence ID" value="NC_010376.1"/>
</dbReference>
<dbReference type="SMR" id="B0RZU2"/>
<dbReference type="STRING" id="334413.FMG_0157"/>
<dbReference type="GeneID" id="60839392"/>
<dbReference type="KEGG" id="fma:FMG_0157"/>
<dbReference type="eggNOG" id="COG0089">
    <property type="taxonomic scope" value="Bacteria"/>
</dbReference>
<dbReference type="HOGENOM" id="CLU_037562_3_2_9"/>
<dbReference type="Proteomes" id="UP000001319">
    <property type="component" value="Chromosome"/>
</dbReference>
<dbReference type="GO" id="GO:1990904">
    <property type="term" value="C:ribonucleoprotein complex"/>
    <property type="evidence" value="ECO:0007669"/>
    <property type="project" value="UniProtKB-KW"/>
</dbReference>
<dbReference type="GO" id="GO:0005840">
    <property type="term" value="C:ribosome"/>
    <property type="evidence" value="ECO:0007669"/>
    <property type="project" value="UniProtKB-KW"/>
</dbReference>
<dbReference type="GO" id="GO:0019843">
    <property type="term" value="F:rRNA binding"/>
    <property type="evidence" value="ECO:0007669"/>
    <property type="project" value="UniProtKB-UniRule"/>
</dbReference>
<dbReference type="GO" id="GO:0003735">
    <property type="term" value="F:structural constituent of ribosome"/>
    <property type="evidence" value="ECO:0007669"/>
    <property type="project" value="InterPro"/>
</dbReference>
<dbReference type="GO" id="GO:0006412">
    <property type="term" value="P:translation"/>
    <property type="evidence" value="ECO:0007669"/>
    <property type="project" value="UniProtKB-UniRule"/>
</dbReference>
<dbReference type="FunFam" id="3.30.70.330:FF:000001">
    <property type="entry name" value="50S ribosomal protein L23"/>
    <property type="match status" value="1"/>
</dbReference>
<dbReference type="Gene3D" id="3.30.70.330">
    <property type="match status" value="1"/>
</dbReference>
<dbReference type="HAMAP" id="MF_01369_B">
    <property type="entry name" value="Ribosomal_uL23_B"/>
    <property type="match status" value="1"/>
</dbReference>
<dbReference type="InterPro" id="IPR012677">
    <property type="entry name" value="Nucleotide-bd_a/b_plait_sf"/>
</dbReference>
<dbReference type="InterPro" id="IPR013025">
    <property type="entry name" value="Ribosomal_uL23-like"/>
</dbReference>
<dbReference type="InterPro" id="IPR012678">
    <property type="entry name" value="Ribosomal_uL23/eL15/eS24_sf"/>
</dbReference>
<dbReference type="NCBIfam" id="NF004359">
    <property type="entry name" value="PRK05738.1-3"/>
    <property type="match status" value="1"/>
</dbReference>
<dbReference type="NCBIfam" id="NF004363">
    <property type="entry name" value="PRK05738.2-4"/>
    <property type="match status" value="1"/>
</dbReference>
<dbReference type="NCBIfam" id="NF004366">
    <property type="entry name" value="PRK05738.3-2"/>
    <property type="match status" value="1"/>
</dbReference>
<dbReference type="PANTHER" id="PTHR11620">
    <property type="entry name" value="60S RIBOSOMAL PROTEIN L23A"/>
    <property type="match status" value="1"/>
</dbReference>
<dbReference type="Pfam" id="PF00276">
    <property type="entry name" value="Ribosomal_L23"/>
    <property type="match status" value="1"/>
</dbReference>
<dbReference type="SUPFAM" id="SSF54189">
    <property type="entry name" value="Ribosomal proteins S24e, L23 and L15e"/>
    <property type="match status" value="1"/>
</dbReference>
<organism>
    <name type="scientific">Finegoldia magna (strain ATCC 29328 / DSM 20472 / WAL 2508)</name>
    <name type="common">Peptostreptococcus magnus</name>
    <dbReference type="NCBI Taxonomy" id="334413"/>
    <lineage>
        <taxon>Bacteria</taxon>
        <taxon>Bacillati</taxon>
        <taxon>Bacillota</taxon>
        <taxon>Tissierellia</taxon>
        <taxon>Tissierellales</taxon>
        <taxon>Peptoniphilaceae</taxon>
        <taxon>Finegoldia</taxon>
    </lineage>
</organism>
<gene>
    <name evidence="1" type="primary">rplW</name>
    <name type="ordered locus">FMG_0157</name>
</gene>
<sequence length="96" mass="11098">MKSPYDIILKPIISEDSMEKMEDKKYVFKVDKNANKIEIRNAIEKIFDVKVKSVNTMNVKGKVKRMGAHSGKRSDWKKAIVALTEDSKEIEFFEGM</sequence>
<protein>
    <recommendedName>
        <fullName evidence="1">Large ribosomal subunit protein uL23</fullName>
    </recommendedName>
    <alternativeName>
        <fullName evidence="2">50S ribosomal protein L23</fullName>
    </alternativeName>
</protein>
<keyword id="KW-1185">Reference proteome</keyword>
<keyword id="KW-0687">Ribonucleoprotein</keyword>
<keyword id="KW-0689">Ribosomal protein</keyword>
<keyword id="KW-0694">RNA-binding</keyword>
<keyword id="KW-0699">rRNA-binding</keyword>
<accession>B0RZU2</accession>
<feature type="chain" id="PRO_1000144566" description="Large ribosomal subunit protein uL23">
    <location>
        <begin position="1"/>
        <end position="96"/>
    </location>
</feature>
<evidence type="ECO:0000255" key="1">
    <source>
        <dbReference type="HAMAP-Rule" id="MF_01369"/>
    </source>
</evidence>
<evidence type="ECO:0000305" key="2"/>
<reference key="1">
    <citation type="journal article" date="2008" name="DNA Res.">
        <title>Complete genome sequence of Finegoldia magna, an anaerobic opportunistic pathogen.</title>
        <authorList>
            <person name="Goto T."/>
            <person name="Yamashita A."/>
            <person name="Hirakawa H."/>
            <person name="Matsutani M."/>
            <person name="Todo K."/>
            <person name="Ohshima K."/>
            <person name="Toh H."/>
            <person name="Miyamoto K."/>
            <person name="Kuhara S."/>
            <person name="Hattori M."/>
            <person name="Shimizu T."/>
            <person name="Akimoto S."/>
        </authorList>
    </citation>
    <scope>NUCLEOTIDE SEQUENCE [LARGE SCALE GENOMIC DNA]</scope>
    <source>
        <strain>ATCC 29328 / DSM 20472 / WAL 2508</strain>
    </source>
</reference>